<reference key="1">
    <citation type="journal article" date="2003" name="DNA Res.">
        <title>Prediction of the coding sequences of mouse homologues of KIAA gene: III. The complete nucleotide sequences of 500 mouse KIAA-homologous cDNAs identified by screening of terminal sequences of cDNA clones randomly sampled from size-fractionated libraries.</title>
        <authorList>
            <person name="Okazaki N."/>
            <person name="Kikuno R."/>
            <person name="Ohara R."/>
            <person name="Inamoto S."/>
            <person name="Koseki H."/>
            <person name="Hiraoka S."/>
            <person name="Saga Y."/>
            <person name="Nagase T."/>
            <person name="Ohara O."/>
            <person name="Koga H."/>
        </authorList>
    </citation>
    <scope>NUCLEOTIDE SEQUENCE [LARGE SCALE MRNA] (ISOFORM 1)</scope>
    <source>
        <tissue>Embryonic tail</tissue>
    </source>
</reference>
<reference key="2">
    <citation type="journal article" date="2005" name="Science">
        <title>The transcriptional landscape of the mammalian genome.</title>
        <authorList>
            <person name="Carninci P."/>
            <person name="Kasukawa T."/>
            <person name="Katayama S."/>
            <person name="Gough J."/>
            <person name="Frith M.C."/>
            <person name="Maeda N."/>
            <person name="Oyama R."/>
            <person name="Ravasi T."/>
            <person name="Lenhard B."/>
            <person name="Wells C."/>
            <person name="Kodzius R."/>
            <person name="Shimokawa K."/>
            <person name="Bajic V.B."/>
            <person name="Brenner S.E."/>
            <person name="Batalov S."/>
            <person name="Forrest A.R."/>
            <person name="Zavolan M."/>
            <person name="Davis M.J."/>
            <person name="Wilming L.G."/>
            <person name="Aidinis V."/>
            <person name="Allen J.E."/>
            <person name="Ambesi-Impiombato A."/>
            <person name="Apweiler R."/>
            <person name="Aturaliya R.N."/>
            <person name="Bailey T.L."/>
            <person name="Bansal M."/>
            <person name="Baxter L."/>
            <person name="Beisel K.W."/>
            <person name="Bersano T."/>
            <person name="Bono H."/>
            <person name="Chalk A.M."/>
            <person name="Chiu K.P."/>
            <person name="Choudhary V."/>
            <person name="Christoffels A."/>
            <person name="Clutterbuck D.R."/>
            <person name="Crowe M.L."/>
            <person name="Dalla E."/>
            <person name="Dalrymple B.P."/>
            <person name="de Bono B."/>
            <person name="Della Gatta G."/>
            <person name="di Bernardo D."/>
            <person name="Down T."/>
            <person name="Engstrom P."/>
            <person name="Fagiolini M."/>
            <person name="Faulkner G."/>
            <person name="Fletcher C.F."/>
            <person name="Fukushima T."/>
            <person name="Furuno M."/>
            <person name="Futaki S."/>
            <person name="Gariboldi M."/>
            <person name="Georgii-Hemming P."/>
            <person name="Gingeras T.R."/>
            <person name="Gojobori T."/>
            <person name="Green R.E."/>
            <person name="Gustincich S."/>
            <person name="Harbers M."/>
            <person name="Hayashi Y."/>
            <person name="Hensch T.K."/>
            <person name="Hirokawa N."/>
            <person name="Hill D."/>
            <person name="Huminiecki L."/>
            <person name="Iacono M."/>
            <person name="Ikeo K."/>
            <person name="Iwama A."/>
            <person name="Ishikawa T."/>
            <person name="Jakt M."/>
            <person name="Kanapin A."/>
            <person name="Katoh M."/>
            <person name="Kawasawa Y."/>
            <person name="Kelso J."/>
            <person name="Kitamura H."/>
            <person name="Kitano H."/>
            <person name="Kollias G."/>
            <person name="Krishnan S.P."/>
            <person name="Kruger A."/>
            <person name="Kummerfeld S.K."/>
            <person name="Kurochkin I.V."/>
            <person name="Lareau L.F."/>
            <person name="Lazarevic D."/>
            <person name="Lipovich L."/>
            <person name="Liu J."/>
            <person name="Liuni S."/>
            <person name="McWilliam S."/>
            <person name="Madan Babu M."/>
            <person name="Madera M."/>
            <person name="Marchionni L."/>
            <person name="Matsuda H."/>
            <person name="Matsuzawa S."/>
            <person name="Miki H."/>
            <person name="Mignone F."/>
            <person name="Miyake S."/>
            <person name="Morris K."/>
            <person name="Mottagui-Tabar S."/>
            <person name="Mulder N."/>
            <person name="Nakano N."/>
            <person name="Nakauchi H."/>
            <person name="Ng P."/>
            <person name="Nilsson R."/>
            <person name="Nishiguchi S."/>
            <person name="Nishikawa S."/>
            <person name="Nori F."/>
            <person name="Ohara O."/>
            <person name="Okazaki Y."/>
            <person name="Orlando V."/>
            <person name="Pang K.C."/>
            <person name="Pavan W.J."/>
            <person name="Pavesi G."/>
            <person name="Pesole G."/>
            <person name="Petrovsky N."/>
            <person name="Piazza S."/>
            <person name="Reed J."/>
            <person name="Reid J.F."/>
            <person name="Ring B.Z."/>
            <person name="Ringwald M."/>
            <person name="Rost B."/>
            <person name="Ruan Y."/>
            <person name="Salzberg S.L."/>
            <person name="Sandelin A."/>
            <person name="Schneider C."/>
            <person name="Schoenbach C."/>
            <person name="Sekiguchi K."/>
            <person name="Semple C.A."/>
            <person name="Seno S."/>
            <person name="Sessa L."/>
            <person name="Sheng Y."/>
            <person name="Shibata Y."/>
            <person name="Shimada H."/>
            <person name="Shimada K."/>
            <person name="Silva D."/>
            <person name="Sinclair B."/>
            <person name="Sperling S."/>
            <person name="Stupka E."/>
            <person name="Sugiura K."/>
            <person name="Sultana R."/>
            <person name="Takenaka Y."/>
            <person name="Taki K."/>
            <person name="Tammoja K."/>
            <person name="Tan S.L."/>
            <person name="Tang S."/>
            <person name="Taylor M.S."/>
            <person name="Tegner J."/>
            <person name="Teichmann S.A."/>
            <person name="Ueda H.R."/>
            <person name="van Nimwegen E."/>
            <person name="Verardo R."/>
            <person name="Wei C.L."/>
            <person name="Yagi K."/>
            <person name="Yamanishi H."/>
            <person name="Zabarovsky E."/>
            <person name="Zhu S."/>
            <person name="Zimmer A."/>
            <person name="Hide W."/>
            <person name="Bult C."/>
            <person name="Grimmond S.M."/>
            <person name="Teasdale R.D."/>
            <person name="Liu E.T."/>
            <person name="Brusic V."/>
            <person name="Quackenbush J."/>
            <person name="Wahlestedt C."/>
            <person name="Mattick J.S."/>
            <person name="Hume D.A."/>
            <person name="Kai C."/>
            <person name="Sasaki D."/>
            <person name="Tomaru Y."/>
            <person name="Fukuda S."/>
            <person name="Kanamori-Katayama M."/>
            <person name="Suzuki M."/>
            <person name="Aoki J."/>
            <person name="Arakawa T."/>
            <person name="Iida J."/>
            <person name="Imamura K."/>
            <person name="Itoh M."/>
            <person name="Kato T."/>
            <person name="Kawaji H."/>
            <person name="Kawagashira N."/>
            <person name="Kawashima T."/>
            <person name="Kojima M."/>
            <person name="Kondo S."/>
            <person name="Konno H."/>
            <person name="Nakano K."/>
            <person name="Ninomiya N."/>
            <person name="Nishio T."/>
            <person name="Okada M."/>
            <person name="Plessy C."/>
            <person name="Shibata K."/>
            <person name="Shiraki T."/>
            <person name="Suzuki S."/>
            <person name="Tagami M."/>
            <person name="Waki K."/>
            <person name="Watahiki A."/>
            <person name="Okamura-Oho Y."/>
            <person name="Suzuki H."/>
            <person name="Kawai J."/>
            <person name="Hayashizaki Y."/>
        </authorList>
    </citation>
    <scope>NUCLEOTIDE SEQUENCE [LARGE SCALE MRNA] (ISOFORMS 1 AND 2)</scope>
    <source>
        <strain>C57BL/6J</strain>
        <strain>DBA/2J</strain>
        <tissue>Blastocyst</tissue>
        <tissue>Tongue</tissue>
    </source>
</reference>
<reference key="3">
    <citation type="journal article" date="2009" name="PLoS Biol.">
        <title>Lineage-specific biology revealed by a finished genome assembly of the mouse.</title>
        <authorList>
            <person name="Church D.M."/>
            <person name="Goodstadt L."/>
            <person name="Hillier L.W."/>
            <person name="Zody M.C."/>
            <person name="Goldstein S."/>
            <person name="She X."/>
            <person name="Bult C.J."/>
            <person name="Agarwala R."/>
            <person name="Cherry J.L."/>
            <person name="DiCuccio M."/>
            <person name="Hlavina W."/>
            <person name="Kapustin Y."/>
            <person name="Meric P."/>
            <person name="Maglott D."/>
            <person name="Birtle Z."/>
            <person name="Marques A.C."/>
            <person name="Graves T."/>
            <person name="Zhou S."/>
            <person name="Teague B."/>
            <person name="Potamousis K."/>
            <person name="Churas C."/>
            <person name="Place M."/>
            <person name="Herschleb J."/>
            <person name="Runnheim R."/>
            <person name="Forrest D."/>
            <person name="Amos-Landgraf J."/>
            <person name="Schwartz D.C."/>
            <person name="Cheng Z."/>
            <person name="Lindblad-Toh K."/>
            <person name="Eichler E.E."/>
            <person name="Ponting C.P."/>
        </authorList>
    </citation>
    <scope>NUCLEOTIDE SEQUENCE [LARGE SCALE GENOMIC DNA]</scope>
    <source>
        <strain>C57BL/6J</strain>
    </source>
</reference>
<reference key="4">
    <citation type="journal article" date="2004" name="Genome Res.">
        <title>The status, quality, and expansion of the NIH full-length cDNA project: the Mammalian Gene Collection (MGC).</title>
        <authorList>
            <consortium name="The MGC Project Team"/>
        </authorList>
    </citation>
    <scope>NUCLEOTIDE SEQUENCE [LARGE SCALE MRNA] (ISOFORM 1)</scope>
    <source>
        <strain>FVB/N</strain>
        <tissue>Eye</tissue>
        <tissue>Mammary tumor</tissue>
    </source>
</reference>
<reference key="5">
    <citation type="journal article" date="1998" name="Mol. Immunol.">
        <title>Expressed genes in interleukin-4 treated B cells identified by cDNA representational difference analysis.</title>
        <authorList>
            <person name="Chu C.C."/>
            <person name="Paul W.E."/>
        </authorList>
    </citation>
    <scope>NUCLEOTIDE SEQUENCE [MRNA] OF 216-371 (ISOFORMS 1/2)</scope>
    <source>
        <strain>BALB/cJ</strain>
        <tissue>Spleen</tissue>
    </source>
</reference>
<reference key="6">
    <citation type="journal article" date="2010" name="Biochem. Biophys. Res. Commun.">
        <title>Fast kinase domain-containing protein 3 is a mitochondrial protein essential for cellular respiration.</title>
        <authorList>
            <person name="Simarro M."/>
            <person name="Gimenez-Cassina A."/>
            <person name="Kedersha N."/>
            <person name="Lazaro J.B."/>
            <person name="Adelmant G.O."/>
            <person name="Marto J.A."/>
            <person name="Rhee K."/>
            <person name="Tisdale S."/>
            <person name="Danial N."/>
            <person name="Benarafa C."/>
            <person name="Orduna A."/>
            <person name="Anderson P."/>
        </authorList>
    </citation>
    <scope>TISSUE SPECIFICITY</scope>
</reference>
<reference key="7">
    <citation type="journal article" date="2010" name="Cell">
        <title>A tissue-specific atlas of mouse protein phosphorylation and expression.</title>
        <authorList>
            <person name="Huttlin E.L."/>
            <person name="Jedrychowski M.P."/>
            <person name="Elias J.E."/>
            <person name="Goswami T."/>
            <person name="Rad R."/>
            <person name="Beausoleil S.A."/>
            <person name="Villen J."/>
            <person name="Haas W."/>
            <person name="Sowa M.E."/>
            <person name="Gygi S.P."/>
        </authorList>
    </citation>
    <scope>IDENTIFICATION BY MASS SPECTROMETRY [LARGE SCALE ANALYSIS]</scope>
    <source>
        <tissue>Brain</tissue>
        <tissue>Brown adipose tissue</tissue>
        <tissue>Heart</tissue>
        <tissue>Kidney</tissue>
        <tissue>Liver</tissue>
        <tissue>Spleen</tissue>
        <tissue>Testis</tissue>
    </source>
</reference>
<evidence type="ECO:0000250" key="1">
    <source>
        <dbReference type="UniProtKB" id="Q969Z0"/>
    </source>
</evidence>
<evidence type="ECO:0000255" key="2">
    <source>
        <dbReference type="PROSITE-ProRule" id="PRU00619"/>
    </source>
</evidence>
<evidence type="ECO:0000269" key="3">
    <source>
    </source>
</evidence>
<evidence type="ECO:0000303" key="4">
    <source>
    </source>
</evidence>
<evidence type="ECO:0000305" key="5"/>
<proteinExistence type="evidence at protein level"/>
<protein>
    <recommendedName>
        <fullName>FAST kinase domain-containing protein 4</fullName>
    </recommendedName>
    <alternativeName>
        <fullName>Protein TBRG4</fullName>
    </alternativeName>
    <alternativeName>
        <fullName>Transforming growth factor beta regulator 4</fullName>
    </alternativeName>
</protein>
<comment type="function">
    <text evidence="1">Plays a role in processing of mitochondrial RNA precursors and in stabilization of a subset of mature mitochondrial RNA species, such as MT-CO1, MT-CO2, MT-CYB, MT-CO3, MT-ND3, MT-ND5 and MT-ATP8/6. May play a role in cell cycle progression.</text>
</comment>
<comment type="subcellular location">
    <subcellularLocation>
        <location evidence="1">Mitochondrion matrix</location>
    </subcellularLocation>
</comment>
<comment type="alternative products">
    <event type="alternative splicing"/>
    <isoform>
        <id>Q91YM4-1</id>
        <name>1</name>
        <sequence type="displayed"/>
    </isoform>
    <isoform>
        <id>Q91YM4-2</id>
        <name>2</name>
        <sequence type="described" ref="VSP_022461"/>
    </isoform>
</comment>
<comment type="tissue specificity">
    <text evidence="3">Expression detected in spleen, testis, colon, heart, smooth muscle, kidney, brain, lung, liver, brown and white adipose tissue with highest expression in testis, heart, smooth muscle and brown adipose tissue.</text>
</comment>
<comment type="similarity">
    <text evidence="5">Belongs to the FAST kinase family.</text>
</comment>
<comment type="sequence caution" evidence="5">
    <conflict type="erroneous termination">
        <sequence resource="EMBL-CDS" id="AAC36538"/>
    </conflict>
    <text>Truncated C-terminus.</text>
</comment>
<comment type="sequence caution" evidence="5">
    <conflict type="erroneous initiation">
        <sequence resource="EMBL-CDS" id="BAC36037"/>
    </conflict>
</comment>
<comment type="sequence caution" evidence="5">
    <conflict type="erroneous initiation">
        <sequence resource="EMBL-CDS" id="BAC98055"/>
    </conflict>
</comment>
<dbReference type="EMBL" id="AK129245">
    <property type="protein sequence ID" value="BAC98055.1"/>
    <property type="status" value="ALT_INIT"/>
    <property type="molecule type" value="mRNA"/>
</dbReference>
<dbReference type="EMBL" id="AK075897">
    <property type="protein sequence ID" value="BAC36037.1"/>
    <property type="status" value="ALT_INIT"/>
    <property type="molecule type" value="mRNA"/>
</dbReference>
<dbReference type="EMBL" id="AK166760">
    <property type="protein sequence ID" value="BAE38999.1"/>
    <property type="molecule type" value="mRNA"/>
</dbReference>
<dbReference type="EMBL" id="AK168088">
    <property type="protein sequence ID" value="BAE40061.1"/>
    <property type="molecule type" value="mRNA"/>
</dbReference>
<dbReference type="EMBL" id="AL603787">
    <property type="status" value="NOT_ANNOTATED_CDS"/>
    <property type="molecule type" value="Genomic_DNA"/>
</dbReference>
<dbReference type="EMBL" id="BC016483">
    <property type="protein sequence ID" value="AAH16483.1"/>
    <property type="molecule type" value="mRNA"/>
</dbReference>
<dbReference type="EMBL" id="BC031155">
    <property type="protein sequence ID" value="AAH31155.1"/>
    <property type="molecule type" value="mRNA"/>
</dbReference>
<dbReference type="EMBL" id="BC031910">
    <property type="protein sequence ID" value="AAH31910.1"/>
    <property type="molecule type" value="mRNA"/>
</dbReference>
<dbReference type="EMBL" id="U89434">
    <property type="protein sequence ID" value="AAC36538.1"/>
    <property type="status" value="ALT_SEQ"/>
    <property type="molecule type" value="mRNA"/>
</dbReference>
<dbReference type="CCDS" id="CCDS24423.1">
    <molecule id="Q91YM4-1"/>
</dbReference>
<dbReference type="RefSeq" id="NP_001123929.1">
    <molecule id="Q91YM4-1"/>
    <property type="nucleotide sequence ID" value="NM_001130457.2"/>
</dbReference>
<dbReference type="RefSeq" id="NP_001349642.1">
    <molecule id="Q91YM4-1"/>
    <property type="nucleotide sequence ID" value="NM_001362713.1"/>
</dbReference>
<dbReference type="RefSeq" id="NP_001349643.1">
    <molecule id="Q91YM4-1"/>
    <property type="nucleotide sequence ID" value="NM_001362714.1"/>
</dbReference>
<dbReference type="RefSeq" id="NP_598772.1">
    <molecule id="Q91YM4-1"/>
    <property type="nucleotide sequence ID" value="NM_134011.3"/>
</dbReference>
<dbReference type="RefSeq" id="XP_006514670.1">
    <molecule id="Q91YM4-1"/>
    <property type="nucleotide sequence ID" value="XM_006514607.5"/>
</dbReference>
<dbReference type="RefSeq" id="XP_006514671.1">
    <property type="nucleotide sequence ID" value="XM_006514608.3"/>
</dbReference>
<dbReference type="SMR" id="Q91YM4"/>
<dbReference type="BioGRID" id="203983">
    <property type="interactions" value="4"/>
</dbReference>
<dbReference type="FunCoup" id="Q91YM4">
    <property type="interactions" value="2353"/>
</dbReference>
<dbReference type="IntAct" id="Q91YM4">
    <property type="interactions" value="5"/>
</dbReference>
<dbReference type="STRING" id="10090.ENSMUSP00000140835"/>
<dbReference type="GlyGen" id="Q91YM4">
    <property type="glycosylation" value="1 site, 1 O-linked glycan (1 site)"/>
</dbReference>
<dbReference type="iPTMnet" id="Q91YM4"/>
<dbReference type="PhosphoSitePlus" id="Q91YM4"/>
<dbReference type="SwissPalm" id="Q91YM4"/>
<dbReference type="jPOST" id="Q91YM4"/>
<dbReference type="PaxDb" id="10090-ENSMUSP00000000394"/>
<dbReference type="PeptideAtlas" id="Q91YM4"/>
<dbReference type="ProteomicsDB" id="267709">
    <molecule id="Q91YM4-1"/>
</dbReference>
<dbReference type="ProteomicsDB" id="267710">
    <molecule id="Q91YM4-2"/>
</dbReference>
<dbReference type="Pumba" id="Q91YM4"/>
<dbReference type="Antibodypedia" id="13534">
    <property type="antibodies" value="183 antibodies from 28 providers"/>
</dbReference>
<dbReference type="DNASU" id="21379"/>
<dbReference type="Ensembl" id="ENSMUST00000000394.14">
    <molecule id="Q91YM4-1"/>
    <property type="protein sequence ID" value="ENSMUSP00000000394.8"/>
    <property type="gene ID" value="ENSMUSG00000000384.16"/>
</dbReference>
<dbReference type="Ensembl" id="ENSMUST00000156969.8">
    <molecule id="Q91YM4-1"/>
    <property type="protein sequence ID" value="ENSMUSP00000114256.2"/>
    <property type="gene ID" value="ENSMUSG00000000384.16"/>
</dbReference>
<dbReference type="Ensembl" id="ENSMUST00000189268.7">
    <molecule id="Q91YM4-1"/>
    <property type="protein sequence ID" value="ENSMUSP00000140835.2"/>
    <property type="gene ID" value="ENSMUSG00000000384.16"/>
</dbReference>
<dbReference type="GeneID" id="21379"/>
<dbReference type="KEGG" id="mmu:21379"/>
<dbReference type="UCSC" id="uc007hyz.2">
    <molecule id="Q91YM4-1"/>
    <property type="organism name" value="mouse"/>
</dbReference>
<dbReference type="AGR" id="MGI:1100868"/>
<dbReference type="CTD" id="9238"/>
<dbReference type="MGI" id="MGI:1100868">
    <property type="gene designation" value="Tbrg4"/>
</dbReference>
<dbReference type="VEuPathDB" id="HostDB:ENSMUSG00000000384"/>
<dbReference type="eggNOG" id="ENOG502QTRE">
    <property type="taxonomic scope" value="Eukaryota"/>
</dbReference>
<dbReference type="GeneTree" id="ENSGT01030000234607"/>
<dbReference type="HOGENOM" id="CLU_029448_0_0_1"/>
<dbReference type="InParanoid" id="Q91YM4"/>
<dbReference type="OMA" id="LCILQQA"/>
<dbReference type="OrthoDB" id="6501018at2759"/>
<dbReference type="PhylomeDB" id="Q91YM4"/>
<dbReference type="TreeFam" id="TF324885"/>
<dbReference type="BioGRID-ORCS" id="21379">
    <property type="hits" value="12 hits in 78 CRISPR screens"/>
</dbReference>
<dbReference type="ChiTaRS" id="Tbrg4">
    <property type="organism name" value="mouse"/>
</dbReference>
<dbReference type="PRO" id="PR:Q91YM4"/>
<dbReference type="Proteomes" id="UP000000589">
    <property type="component" value="Chromosome 11"/>
</dbReference>
<dbReference type="RNAct" id="Q91YM4">
    <property type="molecule type" value="protein"/>
</dbReference>
<dbReference type="Bgee" id="ENSMUSG00000000384">
    <property type="expression patterns" value="Expressed in ectoplacental cone and 255 other cell types or tissues"/>
</dbReference>
<dbReference type="ExpressionAtlas" id="Q91YM4">
    <property type="expression patterns" value="baseline and differential"/>
</dbReference>
<dbReference type="GO" id="GO:0005759">
    <property type="term" value="C:mitochondrial matrix"/>
    <property type="evidence" value="ECO:0000250"/>
    <property type="project" value="UniProtKB"/>
</dbReference>
<dbReference type="GO" id="GO:0005739">
    <property type="term" value="C:mitochondrion"/>
    <property type="evidence" value="ECO:0007005"/>
    <property type="project" value="MGI"/>
</dbReference>
<dbReference type="GO" id="GO:0090615">
    <property type="term" value="P:mitochondrial mRNA processing"/>
    <property type="evidence" value="ECO:0000250"/>
    <property type="project" value="UniProtKB"/>
</dbReference>
<dbReference type="GO" id="GO:0016071">
    <property type="term" value="P:mRNA metabolic process"/>
    <property type="evidence" value="ECO:0000250"/>
    <property type="project" value="UniProtKB"/>
</dbReference>
<dbReference type="GO" id="GO:0044528">
    <property type="term" value="P:regulation of mitochondrial mRNA stability"/>
    <property type="evidence" value="ECO:0000250"/>
    <property type="project" value="UniProtKB"/>
</dbReference>
<dbReference type="CDD" id="cd23739">
    <property type="entry name" value="TBRG4-like_N"/>
    <property type="match status" value="1"/>
</dbReference>
<dbReference type="InterPro" id="IPR016024">
    <property type="entry name" value="ARM-type_fold"/>
</dbReference>
<dbReference type="InterPro" id="IPR013579">
    <property type="entry name" value="FAST_2"/>
</dbReference>
<dbReference type="InterPro" id="IPR050870">
    <property type="entry name" value="FAST_kinase"/>
</dbReference>
<dbReference type="InterPro" id="IPR010622">
    <property type="entry name" value="FAST_Leu-rich"/>
</dbReference>
<dbReference type="InterPro" id="IPR013584">
    <property type="entry name" value="RAP"/>
</dbReference>
<dbReference type="PANTHER" id="PTHR21228:SF59">
    <property type="entry name" value="FAST KINASE DOMAIN-CONTAINING PROTEIN 4"/>
    <property type="match status" value="1"/>
</dbReference>
<dbReference type="PANTHER" id="PTHR21228">
    <property type="entry name" value="FAST LEU-RICH DOMAIN-CONTAINING"/>
    <property type="match status" value="1"/>
</dbReference>
<dbReference type="Pfam" id="PF06743">
    <property type="entry name" value="FAST_1"/>
    <property type="match status" value="1"/>
</dbReference>
<dbReference type="Pfam" id="PF08368">
    <property type="entry name" value="FAST_2"/>
    <property type="match status" value="1"/>
</dbReference>
<dbReference type="Pfam" id="PF08373">
    <property type="entry name" value="RAP"/>
    <property type="match status" value="1"/>
</dbReference>
<dbReference type="SMART" id="SM00952">
    <property type="entry name" value="RAP"/>
    <property type="match status" value="1"/>
</dbReference>
<dbReference type="SUPFAM" id="SSF48371">
    <property type="entry name" value="ARM repeat"/>
    <property type="match status" value="1"/>
</dbReference>
<dbReference type="PROSITE" id="PS51286">
    <property type="entry name" value="RAP"/>
    <property type="match status" value="1"/>
</dbReference>
<sequence>MAVRLMKRCTCLLREATRLVPTVAPVGRLRLAGVSCKTLTSSVSSPSSGSLAELLGKEQVFTPYPEHQELDFLIEKASRPEQLLELLGSDHSLHHNHAALILIRLSYLLSEKPKEKALLAEDARFQRLVKLVDSQITCVWHGTLVKLLRSLYTLVLPQISKELQSVEQEVRWRLRRLKYKHLVFLAESCASFMKEQHSQELLAELLMHLERRWTEINDSRTLVTMMTMAGHLSESLMNHLEDKCLELVEQFGPDELRKVLVTLAAQSRRSVPLLRAISYHLVQKPFPMTKGMLLDLAYAYGKLSFHQTQVSQRLAADLLPFIPSMTPGEVARCAKSFAFLKWLNLPLFEAFTQHLLSRVQDVSLSHVCSVLLAFARLNFHPEQEEDQFFSMVHEKLDPVLGSLEPALQVDLVWALCVLQHVHETELHTVLHPGLHARFLESKSPKDQSTFQKLVHINTTALLEHPEYKGPFLPASAVAPIPSPSNKKMTPLQKELQETLKALLGNTDKGSLEVATQYGWVLDAEVLLDADGHFLPLRNFVAPHLAQPVGNQPLPPGAKRIAFLRWEFPNFNSRSKDLLGRFVLARRHVLAAGFLVVDVPYYEWLDLKSEWQKSAYLKDKMRKAMAEELAK</sequence>
<keyword id="KW-0025">Alternative splicing</keyword>
<keyword id="KW-0496">Mitochondrion</keyword>
<keyword id="KW-1185">Reference proteome</keyword>
<keyword id="KW-0809">Transit peptide</keyword>
<feature type="transit peptide" description="Mitochondrion" evidence="5">
    <location>
        <begin position="1"/>
        <end status="unknown"/>
    </location>
</feature>
<feature type="chain" id="PRO_0000273027" description="FAST kinase domain-containing protein 4">
    <location>
        <begin status="unknown"/>
        <end position="630"/>
    </location>
</feature>
<feature type="domain" description="RAP" evidence="2">
    <location>
        <begin position="560"/>
        <end position="618"/>
    </location>
</feature>
<feature type="splice variant" id="VSP_022461" description="In isoform 2." evidence="4">
    <original>ASRPEQLLELLGSDHSLHHNHAALILIRLSY</original>
    <variation>D</variation>
    <location>
        <begin position="77"/>
        <end position="107"/>
    </location>
</feature>
<feature type="sequence conflict" description="In Ref. 2; BAC36037." evidence="5" ref="2">
    <original>V</original>
    <variation>L</variation>
    <location>
        <position position="166"/>
    </location>
</feature>
<feature type="sequence conflict" description="In Ref. 2; BAC36037." evidence="5" ref="2">
    <original>T</original>
    <variation>I</variation>
    <location>
        <position position="224"/>
    </location>
</feature>
<feature type="sequence conflict" description="In Ref. 5; AAC36538." evidence="5" ref="5">
    <original>F</original>
    <variation>S</variation>
    <location>
        <position position="286"/>
    </location>
</feature>
<feature type="sequence conflict" description="In Ref. 5; AAC36538." evidence="5" ref="5">
    <original>A</original>
    <variation>V</variation>
    <location>
        <position position="316"/>
    </location>
</feature>
<feature type="sequence conflict" description="In Ref. 5; AAC36538." evidence="5" ref="5">
    <original>P</original>
    <variation>S</variation>
    <location>
        <position position="327"/>
    </location>
</feature>
<organism>
    <name type="scientific">Mus musculus</name>
    <name type="common">Mouse</name>
    <dbReference type="NCBI Taxonomy" id="10090"/>
    <lineage>
        <taxon>Eukaryota</taxon>
        <taxon>Metazoa</taxon>
        <taxon>Chordata</taxon>
        <taxon>Craniata</taxon>
        <taxon>Vertebrata</taxon>
        <taxon>Euteleostomi</taxon>
        <taxon>Mammalia</taxon>
        <taxon>Eutheria</taxon>
        <taxon>Euarchontoglires</taxon>
        <taxon>Glires</taxon>
        <taxon>Rodentia</taxon>
        <taxon>Myomorpha</taxon>
        <taxon>Muroidea</taxon>
        <taxon>Muridae</taxon>
        <taxon>Murinae</taxon>
        <taxon>Mus</taxon>
        <taxon>Mus</taxon>
    </lineage>
</organism>
<accession>Q91YM4</accession>
<accession>O89082</accession>
<accession>Q3TKZ4</accession>
<accession>Q6ZQ19</accession>
<accession>Q8C6D1</accession>
<name>FAKD4_MOUSE</name>
<gene>
    <name type="primary">Tbrg4</name>
    <name type="synonym">Kiaa0948</name>
</gene>